<accession>P0C2T6</accession>
<accession>Q7WYP6</accession>
<protein>
    <recommendedName>
        <fullName evidence="1">L-lactate dehydrogenase 2</fullName>
        <shortName evidence="1">L-LDH 2</shortName>
        <ecNumber evidence="1">1.1.1.27</ecNumber>
    </recommendedName>
</protein>
<gene>
    <name evidence="1" type="primary">ldh2</name>
    <name evidence="2" type="synonym">ldhB</name>
</gene>
<evidence type="ECO:0000255" key="1">
    <source>
        <dbReference type="HAMAP-Rule" id="MF_00488"/>
    </source>
</evidence>
<evidence type="ECO:0000303" key="2">
    <source ref="1"/>
</evidence>
<proteinExistence type="inferred from homology"/>
<reference key="1">
    <citation type="submission" date="2003-02" db="EMBL/GenBank/DDBJ databases">
        <title>Characterization of a lactate dehydrogenase encoded by the ldhB gene of Lactococcus lactis.</title>
        <authorList>
            <person name="Gaspar P."/>
            <person name="Coelho P."/>
            <person name="Neves A.R."/>
            <person name="Shearman C.A."/>
            <person name="Gasson M.J."/>
            <person name="Soares C.M."/>
            <person name="Baptisa A.M."/>
            <person name="Ramos A."/>
            <person name="Santos H."/>
        </authorList>
    </citation>
    <scope>NUCLEOTIDE SEQUENCE [GENOMIC DNA]</scope>
</reference>
<name>LDH2_LACLC</name>
<feature type="chain" id="PRO_0000168355" description="L-lactate dehydrogenase 2">
    <location>
        <begin position="1"/>
        <end position="314"/>
    </location>
</feature>
<feature type="active site" description="Proton acceptor" evidence="1">
    <location>
        <position position="178"/>
    </location>
</feature>
<feature type="binding site" evidence="1">
    <location>
        <position position="16"/>
    </location>
    <ligand>
        <name>NAD(+)</name>
        <dbReference type="ChEBI" id="CHEBI:57540"/>
    </ligand>
</feature>
<feature type="binding site" evidence="1">
    <location>
        <position position="37"/>
    </location>
    <ligand>
        <name>NAD(+)</name>
        <dbReference type="ChEBI" id="CHEBI:57540"/>
    </ligand>
</feature>
<feature type="binding site" evidence="1">
    <location>
        <position position="42"/>
    </location>
    <ligand>
        <name>NAD(+)</name>
        <dbReference type="ChEBI" id="CHEBI:57540"/>
    </ligand>
</feature>
<feature type="binding site" evidence="1">
    <location>
        <position position="68"/>
    </location>
    <ligand>
        <name>NAD(+)</name>
        <dbReference type="ChEBI" id="CHEBI:57540"/>
    </ligand>
</feature>
<feature type="binding site" evidence="1">
    <location>
        <begin position="82"/>
        <end position="83"/>
    </location>
    <ligand>
        <name>NAD(+)</name>
        <dbReference type="ChEBI" id="CHEBI:57540"/>
    </ligand>
</feature>
<feature type="binding site" evidence="1">
    <location>
        <position position="85"/>
    </location>
    <ligand>
        <name>substrate</name>
    </ligand>
</feature>
<feature type="binding site" evidence="1">
    <location>
        <position position="91"/>
    </location>
    <ligand>
        <name>substrate</name>
    </ligand>
</feature>
<feature type="binding site" evidence="1">
    <location>
        <position position="104"/>
    </location>
    <ligand>
        <name>NAD(+)</name>
        <dbReference type="ChEBI" id="CHEBI:57540"/>
    </ligand>
</feature>
<feature type="binding site" evidence="1">
    <location>
        <begin position="121"/>
        <end position="123"/>
    </location>
    <ligand>
        <name>NAD(+)</name>
        <dbReference type="ChEBI" id="CHEBI:57540"/>
    </ligand>
</feature>
<feature type="binding site" evidence="1">
    <location>
        <begin position="123"/>
        <end position="126"/>
    </location>
    <ligand>
        <name>substrate</name>
    </ligand>
</feature>
<feature type="binding site" evidence="1">
    <location>
        <position position="146"/>
    </location>
    <ligand>
        <name>NAD(+)</name>
        <dbReference type="ChEBI" id="CHEBI:57540"/>
    </ligand>
</feature>
<feature type="binding site" evidence="1">
    <location>
        <begin position="151"/>
        <end position="154"/>
    </location>
    <ligand>
        <name>substrate</name>
    </ligand>
</feature>
<feature type="binding site" evidence="1">
    <location>
        <position position="156"/>
    </location>
    <ligand>
        <name>beta-D-fructose 1,6-bisphosphate</name>
        <dbReference type="ChEBI" id="CHEBI:32966"/>
        <note>allosteric activator</note>
    </ligand>
</feature>
<feature type="binding site" evidence="1">
    <location>
        <position position="171"/>
    </location>
    <ligand>
        <name>beta-D-fructose 1,6-bisphosphate</name>
        <dbReference type="ChEBI" id="CHEBI:32966"/>
        <note>allosteric activator</note>
    </ligand>
</feature>
<feature type="binding site" evidence="1">
    <location>
        <position position="232"/>
    </location>
    <ligand>
        <name>substrate</name>
    </ligand>
</feature>
<feature type="modified residue" description="Phosphotyrosine" evidence="1">
    <location>
        <position position="223"/>
    </location>
</feature>
<dbReference type="EC" id="1.1.1.27" evidence="1"/>
<dbReference type="EMBL" id="AY236961">
    <property type="protein sequence ID" value="AAP49572.1"/>
    <property type="molecule type" value="Genomic_DNA"/>
</dbReference>
<dbReference type="RefSeq" id="WP_011834445.1">
    <property type="nucleotide sequence ID" value="NZ_VBTA01000001.1"/>
</dbReference>
<dbReference type="SMR" id="P0C2T6"/>
<dbReference type="OMA" id="EGQYGHK"/>
<dbReference type="BRENDA" id="1.1.1.27">
    <property type="organism ID" value="2903"/>
</dbReference>
<dbReference type="SABIO-RK" id="P0C2T6"/>
<dbReference type="UniPathway" id="UPA00554">
    <property type="reaction ID" value="UER00611"/>
</dbReference>
<dbReference type="GO" id="GO:0005737">
    <property type="term" value="C:cytoplasm"/>
    <property type="evidence" value="ECO:0007669"/>
    <property type="project" value="UniProtKB-SubCell"/>
</dbReference>
<dbReference type="GO" id="GO:0004459">
    <property type="term" value="F:L-lactate dehydrogenase activity"/>
    <property type="evidence" value="ECO:0007669"/>
    <property type="project" value="UniProtKB-UniRule"/>
</dbReference>
<dbReference type="GO" id="GO:0006096">
    <property type="term" value="P:glycolytic process"/>
    <property type="evidence" value="ECO:0007669"/>
    <property type="project" value="UniProtKB-UniRule"/>
</dbReference>
<dbReference type="GO" id="GO:0006089">
    <property type="term" value="P:lactate metabolic process"/>
    <property type="evidence" value="ECO:0007669"/>
    <property type="project" value="TreeGrafter"/>
</dbReference>
<dbReference type="CDD" id="cd05291">
    <property type="entry name" value="HicDH_like"/>
    <property type="match status" value="1"/>
</dbReference>
<dbReference type="FunFam" id="3.40.50.720:FF:000018">
    <property type="entry name" value="Malate dehydrogenase"/>
    <property type="match status" value="1"/>
</dbReference>
<dbReference type="Gene3D" id="3.90.110.10">
    <property type="entry name" value="Lactate dehydrogenase/glycoside hydrolase, family 4, C-terminal"/>
    <property type="match status" value="1"/>
</dbReference>
<dbReference type="Gene3D" id="3.40.50.720">
    <property type="entry name" value="NAD(P)-binding Rossmann-like Domain"/>
    <property type="match status" value="1"/>
</dbReference>
<dbReference type="HAMAP" id="MF_00488">
    <property type="entry name" value="Lactate_dehydrog"/>
    <property type="match status" value="1"/>
</dbReference>
<dbReference type="InterPro" id="IPR001557">
    <property type="entry name" value="L-lactate/malate_DH"/>
</dbReference>
<dbReference type="InterPro" id="IPR011304">
    <property type="entry name" value="L-lactate_DH"/>
</dbReference>
<dbReference type="InterPro" id="IPR018177">
    <property type="entry name" value="L-lactate_DH_AS"/>
</dbReference>
<dbReference type="InterPro" id="IPR022383">
    <property type="entry name" value="Lactate/malate_DH_C"/>
</dbReference>
<dbReference type="InterPro" id="IPR001236">
    <property type="entry name" value="Lactate/malate_DH_N"/>
</dbReference>
<dbReference type="InterPro" id="IPR015955">
    <property type="entry name" value="Lactate_DH/Glyco_Ohase_4_C"/>
</dbReference>
<dbReference type="InterPro" id="IPR036291">
    <property type="entry name" value="NAD(P)-bd_dom_sf"/>
</dbReference>
<dbReference type="NCBIfam" id="TIGR01771">
    <property type="entry name" value="L-LDH-NAD"/>
    <property type="match status" value="1"/>
</dbReference>
<dbReference type="NCBIfam" id="NF000824">
    <property type="entry name" value="PRK00066.1"/>
    <property type="match status" value="1"/>
</dbReference>
<dbReference type="NCBIfam" id="NF004863">
    <property type="entry name" value="PRK06223.1"/>
    <property type="match status" value="1"/>
</dbReference>
<dbReference type="PANTHER" id="PTHR43128">
    <property type="entry name" value="L-2-HYDROXYCARBOXYLATE DEHYDROGENASE (NAD(P)(+))"/>
    <property type="match status" value="1"/>
</dbReference>
<dbReference type="PANTHER" id="PTHR43128:SF16">
    <property type="entry name" value="L-LACTATE DEHYDROGENASE"/>
    <property type="match status" value="1"/>
</dbReference>
<dbReference type="Pfam" id="PF02866">
    <property type="entry name" value="Ldh_1_C"/>
    <property type="match status" value="1"/>
</dbReference>
<dbReference type="Pfam" id="PF00056">
    <property type="entry name" value="Ldh_1_N"/>
    <property type="match status" value="1"/>
</dbReference>
<dbReference type="PIRSF" id="PIRSF000102">
    <property type="entry name" value="Lac_mal_DH"/>
    <property type="match status" value="1"/>
</dbReference>
<dbReference type="PRINTS" id="PR00086">
    <property type="entry name" value="LLDHDRGNASE"/>
</dbReference>
<dbReference type="SUPFAM" id="SSF56327">
    <property type="entry name" value="LDH C-terminal domain-like"/>
    <property type="match status" value="1"/>
</dbReference>
<dbReference type="SUPFAM" id="SSF51735">
    <property type="entry name" value="NAD(P)-binding Rossmann-fold domains"/>
    <property type="match status" value="1"/>
</dbReference>
<dbReference type="PROSITE" id="PS00064">
    <property type="entry name" value="L_LDH"/>
    <property type="match status" value="1"/>
</dbReference>
<keyword id="KW-0021">Allosteric enzyme</keyword>
<keyword id="KW-0963">Cytoplasm</keyword>
<keyword id="KW-0520">NAD</keyword>
<keyword id="KW-0560">Oxidoreductase</keyword>
<keyword id="KW-0597">Phosphoprotein</keyword>
<comment type="function">
    <text evidence="1">Catalyzes the conversion of lactate to pyruvate.</text>
</comment>
<comment type="catalytic activity">
    <reaction evidence="1">
        <text>(S)-lactate + NAD(+) = pyruvate + NADH + H(+)</text>
        <dbReference type="Rhea" id="RHEA:23444"/>
        <dbReference type="ChEBI" id="CHEBI:15361"/>
        <dbReference type="ChEBI" id="CHEBI:15378"/>
        <dbReference type="ChEBI" id="CHEBI:16651"/>
        <dbReference type="ChEBI" id="CHEBI:57540"/>
        <dbReference type="ChEBI" id="CHEBI:57945"/>
        <dbReference type="EC" id="1.1.1.27"/>
    </reaction>
</comment>
<comment type="activity regulation">
    <text evidence="1">Allosterically activated by fructose 1,6-bisphosphate (FBP).</text>
</comment>
<comment type="pathway">
    <text evidence="1">Fermentation; pyruvate fermentation to lactate; (S)-lactate from pyruvate: step 1/1.</text>
</comment>
<comment type="subunit">
    <text evidence="1">Homotetramer.</text>
</comment>
<comment type="subcellular location">
    <subcellularLocation>
        <location evidence="1">Cytoplasm</location>
    </subcellularLocation>
</comment>
<comment type="similarity">
    <text evidence="1">Belongs to the LDH/MDH superfamily. LDH family.</text>
</comment>
<organism>
    <name type="scientific">Lactococcus lactis subsp. cremoris</name>
    <name type="common">Streptococcus cremoris</name>
    <dbReference type="NCBI Taxonomy" id="1359"/>
    <lineage>
        <taxon>Bacteria</taxon>
        <taxon>Bacillati</taxon>
        <taxon>Bacillota</taxon>
        <taxon>Bacilli</taxon>
        <taxon>Lactobacillales</taxon>
        <taxon>Streptococcaceae</taxon>
        <taxon>Lactococcus</taxon>
    </lineage>
</organism>
<sequence length="314" mass="34398">MKITSRKVVVIGTGFVGTSIAYSMINQGLVNELVLIDVNQDKAEGEALDLLDGISWAQENVIVRAGNYKDCENADIVVITAGVNQKPGQSRLDLVNTNAKIMRSIVTQVMDSGFDGIFVIASNPVDILTYVAWETSGLDQSRIVGTGTTLDTTRFRKELATKLEIDPRSVHGYIIGEHGDSEVAVWSHTTIGGKPILEFIVKNKKIGLEDLSNLSNKVKNAAYEIIDKKQATYYGIGMSTARIVKAILNNEQVILPVSAYLRGEYGQEGVFTGVPSVVNQNGVREIIELNIDAYEMKQFEKSVSQLKEVIESIK</sequence>